<organism>
    <name type="scientific">Treponema denticola (strain ATCC 35405 / DSM 14222 / CIP 103919 / JCM 8153 / KCTC 15104)</name>
    <dbReference type="NCBI Taxonomy" id="243275"/>
    <lineage>
        <taxon>Bacteria</taxon>
        <taxon>Pseudomonadati</taxon>
        <taxon>Spirochaetota</taxon>
        <taxon>Spirochaetia</taxon>
        <taxon>Spirochaetales</taxon>
        <taxon>Treponemataceae</taxon>
        <taxon>Treponema</taxon>
    </lineage>
</organism>
<accession>Q73M76</accession>
<keyword id="KW-0963">Cytoplasm</keyword>
<keyword id="KW-0597">Phosphoprotein</keyword>
<keyword id="KW-1185">Reference proteome</keyword>
<dbReference type="EMBL" id="AE017226">
    <property type="protein sequence ID" value="AAS12150.1"/>
    <property type="molecule type" value="Genomic_DNA"/>
</dbReference>
<dbReference type="RefSeq" id="NP_972239.1">
    <property type="nucleotide sequence ID" value="NC_002967.9"/>
</dbReference>
<dbReference type="RefSeq" id="WP_002669237.1">
    <property type="nucleotide sequence ID" value="NC_002967.9"/>
</dbReference>
<dbReference type="SMR" id="Q73M76"/>
<dbReference type="STRING" id="243275.TDE_1633"/>
<dbReference type="PaxDb" id="243275-TDE_1633"/>
<dbReference type="GeneID" id="2739742"/>
<dbReference type="KEGG" id="tde:TDE_1633"/>
<dbReference type="PATRIC" id="fig|243275.7.peg.1561"/>
<dbReference type="eggNOG" id="COG3052">
    <property type="taxonomic scope" value="Bacteria"/>
</dbReference>
<dbReference type="HOGENOM" id="CLU_158489_0_0_12"/>
<dbReference type="OrthoDB" id="1120942at2"/>
<dbReference type="Proteomes" id="UP000008212">
    <property type="component" value="Chromosome"/>
</dbReference>
<dbReference type="GO" id="GO:0005737">
    <property type="term" value="C:cytoplasm"/>
    <property type="evidence" value="ECO:0007669"/>
    <property type="project" value="UniProtKB-SubCell"/>
</dbReference>
<dbReference type="HAMAP" id="MF_00805">
    <property type="entry name" value="CitD"/>
    <property type="match status" value="1"/>
</dbReference>
<dbReference type="InterPro" id="IPR006495">
    <property type="entry name" value="CitD"/>
</dbReference>
<dbReference type="InterPro" id="IPR023439">
    <property type="entry name" value="Mal_deCO2ase/Cit_lyase_ACP"/>
</dbReference>
<dbReference type="NCBIfam" id="TIGR01608">
    <property type="entry name" value="citD"/>
    <property type="match status" value="1"/>
</dbReference>
<dbReference type="NCBIfam" id="NF009726">
    <property type="entry name" value="PRK13253.1"/>
    <property type="match status" value="1"/>
</dbReference>
<dbReference type="Pfam" id="PF06857">
    <property type="entry name" value="ACP"/>
    <property type="match status" value="1"/>
</dbReference>
<dbReference type="PIRSF" id="PIRSF002736">
    <property type="entry name" value="Citrt_lyas_gamma"/>
    <property type="match status" value="1"/>
</dbReference>
<gene>
    <name evidence="1" type="primary">citD</name>
    <name type="ordered locus">TDE_1633</name>
</gene>
<comment type="function">
    <text evidence="1">Covalent carrier of the coenzyme of citrate lyase.</text>
</comment>
<comment type="subunit">
    <text evidence="1">Oligomer with a subunit composition of (alpha,beta,gamma)6.</text>
</comment>
<comment type="subcellular location">
    <subcellularLocation>
        <location evidence="1">Cytoplasm</location>
    </subcellularLocation>
</comment>
<comment type="similarity">
    <text evidence="1">Belongs to the CitD family.</text>
</comment>
<protein>
    <recommendedName>
        <fullName evidence="1">Citrate lyase acyl carrier protein</fullName>
    </recommendedName>
    <alternativeName>
        <fullName evidence="1">Citrate lyase gamma chain</fullName>
    </alternativeName>
</protein>
<evidence type="ECO:0000255" key="1">
    <source>
        <dbReference type="HAMAP-Rule" id="MF_00805"/>
    </source>
</evidence>
<feature type="chain" id="PRO_0000214717" description="Citrate lyase acyl carrier protein">
    <location>
        <begin position="1"/>
        <end position="87"/>
    </location>
</feature>
<feature type="modified residue" description="O-(phosphoribosyl dephospho-coenzyme A)serine" evidence="1">
    <location>
        <position position="14"/>
    </location>
</feature>
<name>CITD_TREDE</name>
<sequence length="87" mass="9807">MQIKREAVCGTLQSNDCLVRIVPSEKLELDLKSSVLNEFGAQIKKTVQEVLDEFEVKNAKLFIEDKGALDCTIKARVETALRRANEK</sequence>
<proteinExistence type="inferred from homology"/>
<reference key="1">
    <citation type="journal article" date="2004" name="Proc. Natl. Acad. Sci. U.S.A.">
        <title>Comparison of the genome of the oral pathogen Treponema denticola with other spirochete genomes.</title>
        <authorList>
            <person name="Seshadri R."/>
            <person name="Myers G.S.A."/>
            <person name="Tettelin H."/>
            <person name="Eisen J.A."/>
            <person name="Heidelberg J.F."/>
            <person name="Dodson R.J."/>
            <person name="Davidsen T.M."/>
            <person name="DeBoy R.T."/>
            <person name="Fouts D.E."/>
            <person name="Haft D.H."/>
            <person name="Selengut J."/>
            <person name="Ren Q."/>
            <person name="Brinkac L.M."/>
            <person name="Madupu R."/>
            <person name="Kolonay J.F."/>
            <person name="Durkin S.A."/>
            <person name="Daugherty S.C."/>
            <person name="Shetty J."/>
            <person name="Shvartsbeyn A."/>
            <person name="Gebregeorgis E."/>
            <person name="Geer K."/>
            <person name="Tsegaye G."/>
            <person name="Malek J.A."/>
            <person name="Ayodeji B."/>
            <person name="Shatsman S."/>
            <person name="McLeod M.P."/>
            <person name="Smajs D."/>
            <person name="Howell J.K."/>
            <person name="Pal S."/>
            <person name="Amin A."/>
            <person name="Vashisth P."/>
            <person name="McNeill T.Z."/>
            <person name="Xiang Q."/>
            <person name="Sodergren E."/>
            <person name="Baca E."/>
            <person name="Weinstock G.M."/>
            <person name="Norris S.J."/>
            <person name="Fraser C.M."/>
            <person name="Paulsen I.T."/>
        </authorList>
    </citation>
    <scope>NUCLEOTIDE SEQUENCE [LARGE SCALE GENOMIC DNA]</scope>
    <source>
        <strain>ATCC 35405 / DSM 14222 / CIP 103919 / JCM 8153 / KCTC 15104</strain>
    </source>
</reference>